<organism>
    <name type="scientific">Chlorobium phaeobacteroides (strain BS1)</name>
    <dbReference type="NCBI Taxonomy" id="331678"/>
    <lineage>
        <taxon>Bacteria</taxon>
        <taxon>Pseudomonadati</taxon>
        <taxon>Chlorobiota</taxon>
        <taxon>Chlorobiia</taxon>
        <taxon>Chlorobiales</taxon>
        <taxon>Chlorobiaceae</taxon>
        <taxon>Chlorobium/Pelodictyon group</taxon>
        <taxon>Chlorobium</taxon>
    </lineage>
</organism>
<proteinExistence type="inferred from homology"/>
<evidence type="ECO:0000255" key="1">
    <source>
        <dbReference type="HAMAP-Rule" id="MF_01227"/>
    </source>
</evidence>
<reference key="1">
    <citation type="submission" date="2008-06" db="EMBL/GenBank/DDBJ databases">
        <title>Complete sequence of Chlorobium phaeobacteroides BS1.</title>
        <authorList>
            <consortium name="US DOE Joint Genome Institute"/>
            <person name="Lucas S."/>
            <person name="Copeland A."/>
            <person name="Lapidus A."/>
            <person name="Glavina del Rio T."/>
            <person name="Dalin E."/>
            <person name="Tice H."/>
            <person name="Bruce D."/>
            <person name="Goodwin L."/>
            <person name="Pitluck S."/>
            <person name="Schmutz J."/>
            <person name="Larimer F."/>
            <person name="Land M."/>
            <person name="Hauser L."/>
            <person name="Kyrpides N."/>
            <person name="Ovchinnikova G."/>
            <person name="Li T."/>
            <person name="Liu Z."/>
            <person name="Zhao F."/>
            <person name="Overmann J."/>
            <person name="Bryant D.A."/>
            <person name="Richardson P."/>
        </authorList>
    </citation>
    <scope>NUCLEOTIDE SEQUENCE [LARGE SCALE GENOMIC DNA]</scope>
    <source>
        <strain>BS1</strain>
    </source>
</reference>
<feature type="chain" id="PRO_1000139416" description="CTP synthase">
    <location>
        <begin position="1"/>
        <end position="565"/>
    </location>
</feature>
<feature type="domain" description="Glutamine amidotransferase type-1" evidence="1">
    <location>
        <begin position="299"/>
        <end position="543"/>
    </location>
</feature>
<feature type="region of interest" description="Amidoligase domain" evidence="1">
    <location>
        <begin position="1"/>
        <end position="272"/>
    </location>
</feature>
<feature type="active site" description="Nucleophile; for glutamine hydrolysis" evidence="1">
    <location>
        <position position="390"/>
    </location>
</feature>
<feature type="active site" evidence="1">
    <location>
        <position position="516"/>
    </location>
</feature>
<feature type="active site" evidence="1">
    <location>
        <position position="518"/>
    </location>
</feature>
<feature type="binding site" evidence="1">
    <location>
        <position position="18"/>
    </location>
    <ligand>
        <name>CTP</name>
        <dbReference type="ChEBI" id="CHEBI:37563"/>
        <note>allosteric inhibitor</note>
    </ligand>
</feature>
<feature type="binding site" evidence="1">
    <location>
        <position position="18"/>
    </location>
    <ligand>
        <name>UTP</name>
        <dbReference type="ChEBI" id="CHEBI:46398"/>
    </ligand>
</feature>
<feature type="binding site" evidence="1">
    <location>
        <begin position="19"/>
        <end position="24"/>
    </location>
    <ligand>
        <name>ATP</name>
        <dbReference type="ChEBI" id="CHEBI:30616"/>
    </ligand>
</feature>
<feature type="binding site" evidence="1">
    <location>
        <position position="59"/>
    </location>
    <ligand>
        <name>L-glutamine</name>
        <dbReference type="ChEBI" id="CHEBI:58359"/>
    </ligand>
</feature>
<feature type="binding site" evidence="1">
    <location>
        <position position="76"/>
    </location>
    <ligand>
        <name>ATP</name>
        <dbReference type="ChEBI" id="CHEBI:30616"/>
    </ligand>
</feature>
<feature type="binding site" evidence="1">
    <location>
        <position position="76"/>
    </location>
    <ligand>
        <name>Mg(2+)</name>
        <dbReference type="ChEBI" id="CHEBI:18420"/>
    </ligand>
</feature>
<feature type="binding site" evidence="1">
    <location>
        <position position="146"/>
    </location>
    <ligand>
        <name>Mg(2+)</name>
        <dbReference type="ChEBI" id="CHEBI:18420"/>
    </ligand>
</feature>
<feature type="binding site" evidence="1">
    <location>
        <begin position="153"/>
        <end position="155"/>
    </location>
    <ligand>
        <name>CTP</name>
        <dbReference type="ChEBI" id="CHEBI:37563"/>
        <note>allosteric inhibitor</note>
    </ligand>
</feature>
<feature type="binding site" evidence="1">
    <location>
        <begin position="193"/>
        <end position="198"/>
    </location>
    <ligand>
        <name>CTP</name>
        <dbReference type="ChEBI" id="CHEBI:37563"/>
        <note>allosteric inhibitor</note>
    </ligand>
</feature>
<feature type="binding site" evidence="1">
    <location>
        <begin position="193"/>
        <end position="198"/>
    </location>
    <ligand>
        <name>UTP</name>
        <dbReference type="ChEBI" id="CHEBI:46398"/>
    </ligand>
</feature>
<feature type="binding site" evidence="1">
    <location>
        <position position="229"/>
    </location>
    <ligand>
        <name>CTP</name>
        <dbReference type="ChEBI" id="CHEBI:37563"/>
        <note>allosteric inhibitor</note>
    </ligand>
</feature>
<feature type="binding site" evidence="1">
    <location>
        <position position="229"/>
    </location>
    <ligand>
        <name>UTP</name>
        <dbReference type="ChEBI" id="CHEBI:46398"/>
    </ligand>
</feature>
<feature type="binding site" evidence="1">
    <location>
        <position position="363"/>
    </location>
    <ligand>
        <name>L-glutamine</name>
        <dbReference type="ChEBI" id="CHEBI:58359"/>
    </ligand>
</feature>
<feature type="binding site" evidence="1">
    <location>
        <begin position="391"/>
        <end position="394"/>
    </location>
    <ligand>
        <name>L-glutamine</name>
        <dbReference type="ChEBI" id="CHEBI:58359"/>
    </ligand>
</feature>
<feature type="binding site" evidence="1">
    <location>
        <position position="414"/>
    </location>
    <ligand>
        <name>L-glutamine</name>
        <dbReference type="ChEBI" id="CHEBI:58359"/>
    </ligand>
</feature>
<feature type="binding site" evidence="1">
    <location>
        <position position="471"/>
    </location>
    <ligand>
        <name>L-glutamine</name>
        <dbReference type="ChEBI" id="CHEBI:58359"/>
    </ligand>
</feature>
<sequence>MARPKNVKHIFVTGGVVSSLGKGILSASLGLLLKSRGLRVAIQKYDPYINVDPGTMSPYQHGEVYVTDDGAETDLDLGHYERFLDEPTSQASNLTMGRVYKAVIDKERQGEYLGGTVQVVPHVIDEIKAKMNELAKNANLDVLITEIGGTIGDIESLPFLEAMRQLKLDLGTKNLLNIHLTLVPYIKAACEMKTKPTQHSVKMLLETGIQPDILVCRSEKPLSREIKNKVGHFCNLHEADVIGLSDCETIYGVPIMLLDEQLDKRVLKKLGIKKFQDPELSYWTEFCDKVKHPEDGEVTIAVCGKYTEYPDAYKSILESFVHAGAVNNVKVTVRFIRSEDAEESGCDIATAMKDVHGLLVAPGFGDRGIEGKISFIRYARENNIPFLGICLGMQCATIEFARNVCGLSEANSTEFSKRCRQPVIDLMEHQKKVKEKGGTMRLGSYPCILKEDTIANKAYGKFLINERHRHRYEFNNEYRELLEQNGMLFSGTSPNGDLVEIIEISGHPWFVGVQFHPEYKSRVRSAHPLFVGFVAAAKAFAFGDRQLSFEPDTLPLGEPERTLEG</sequence>
<protein>
    <recommendedName>
        <fullName evidence="1">CTP synthase</fullName>
        <ecNumber evidence="1">6.3.4.2</ecNumber>
    </recommendedName>
    <alternativeName>
        <fullName evidence="1">Cytidine 5'-triphosphate synthase</fullName>
    </alternativeName>
    <alternativeName>
        <fullName evidence="1">Cytidine triphosphate synthetase</fullName>
        <shortName evidence="1">CTP synthetase</shortName>
        <shortName evidence="1">CTPS</shortName>
    </alternativeName>
    <alternativeName>
        <fullName evidence="1">UTP--ammonia ligase</fullName>
    </alternativeName>
</protein>
<comment type="function">
    <text evidence="1">Catalyzes the ATP-dependent amination of UTP to CTP with either L-glutamine or ammonia as the source of nitrogen. Regulates intracellular CTP levels through interactions with the four ribonucleotide triphosphates.</text>
</comment>
<comment type="catalytic activity">
    <reaction evidence="1">
        <text>UTP + L-glutamine + ATP + H2O = CTP + L-glutamate + ADP + phosphate + 2 H(+)</text>
        <dbReference type="Rhea" id="RHEA:26426"/>
        <dbReference type="ChEBI" id="CHEBI:15377"/>
        <dbReference type="ChEBI" id="CHEBI:15378"/>
        <dbReference type="ChEBI" id="CHEBI:29985"/>
        <dbReference type="ChEBI" id="CHEBI:30616"/>
        <dbReference type="ChEBI" id="CHEBI:37563"/>
        <dbReference type="ChEBI" id="CHEBI:43474"/>
        <dbReference type="ChEBI" id="CHEBI:46398"/>
        <dbReference type="ChEBI" id="CHEBI:58359"/>
        <dbReference type="ChEBI" id="CHEBI:456216"/>
        <dbReference type="EC" id="6.3.4.2"/>
    </reaction>
</comment>
<comment type="catalytic activity">
    <reaction evidence="1">
        <text>L-glutamine + H2O = L-glutamate + NH4(+)</text>
        <dbReference type="Rhea" id="RHEA:15889"/>
        <dbReference type="ChEBI" id="CHEBI:15377"/>
        <dbReference type="ChEBI" id="CHEBI:28938"/>
        <dbReference type="ChEBI" id="CHEBI:29985"/>
        <dbReference type="ChEBI" id="CHEBI:58359"/>
    </reaction>
</comment>
<comment type="catalytic activity">
    <reaction evidence="1">
        <text>UTP + NH4(+) + ATP = CTP + ADP + phosphate + 2 H(+)</text>
        <dbReference type="Rhea" id="RHEA:16597"/>
        <dbReference type="ChEBI" id="CHEBI:15378"/>
        <dbReference type="ChEBI" id="CHEBI:28938"/>
        <dbReference type="ChEBI" id="CHEBI:30616"/>
        <dbReference type="ChEBI" id="CHEBI:37563"/>
        <dbReference type="ChEBI" id="CHEBI:43474"/>
        <dbReference type="ChEBI" id="CHEBI:46398"/>
        <dbReference type="ChEBI" id="CHEBI:456216"/>
    </reaction>
</comment>
<comment type="activity regulation">
    <text evidence="1">Allosterically activated by GTP, when glutamine is the substrate; GTP has no effect on the reaction when ammonia is the substrate. The allosteric effector GTP functions by stabilizing the protein conformation that binds the tetrahedral intermediate(s) formed during glutamine hydrolysis. Inhibited by the product CTP, via allosteric rather than competitive inhibition.</text>
</comment>
<comment type="pathway">
    <text evidence="1">Pyrimidine metabolism; CTP biosynthesis via de novo pathway; CTP from UDP: step 2/2.</text>
</comment>
<comment type="subunit">
    <text evidence="1">Homotetramer.</text>
</comment>
<comment type="miscellaneous">
    <text evidence="1">CTPSs have evolved a hybrid strategy for distinguishing between UTP and CTP. The overlapping regions of the product feedback inhibitory and substrate sites recognize a common feature in both compounds, the triphosphate moiety. To differentiate isosteric substrate and product pyrimidine rings, an additional pocket far from the expected kinase/ligase catalytic site, specifically recognizes the cytosine and ribose portions of the product inhibitor.</text>
</comment>
<comment type="similarity">
    <text evidence="1">Belongs to the CTP synthase family.</text>
</comment>
<keyword id="KW-0067">ATP-binding</keyword>
<keyword id="KW-0315">Glutamine amidotransferase</keyword>
<keyword id="KW-0436">Ligase</keyword>
<keyword id="KW-0460">Magnesium</keyword>
<keyword id="KW-0479">Metal-binding</keyword>
<keyword id="KW-0547">Nucleotide-binding</keyword>
<keyword id="KW-0665">Pyrimidine biosynthesis</keyword>
<dbReference type="EC" id="6.3.4.2" evidence="1"/>
<dbReference type="EMBL" id="CP001101">
    <property type="protein sequence ID" value="ACE03107.1"/>
    <property type="molecule type" value="Genomic_DNA"/>
</dbReference>
<dbReference type="SMR" id="B3EK39"/>
<dbReference type="STRING" id="331678.Cphamn1_0127"/>
<dbReference type="MEROPS" id="C26.964"/>
<dbReference type="KEGG" id="cpb:Cphamn1_0127"/>
<dbReference type="eggNOG" id="COG0504">
    <property type="taxonomic scope" value="Bacteria"/>
</dbReference>
<dbReference type="HOGENOM" id="CLU_011675_5_0_10"/>
<dbReference type="OrthoDB" id="9801107at2"/>
<dbReference type="UniPathway" id="UPA00159">
    <property type="reaction ID" value="UER00277"/>
</dbReference>
<dbReference type="GO" id="GO:0005829">
    <property type="term" value="C:cytosol"/>
    <property type="evidence" value="ECO:0007669"/>
    <property type="project" value="TreeGrafter"/>
</dbReference>
<dbReference type="GO" id="GO:0005524">
    <property type="term" value="F:ATP binding"/>
    <property type="evidence" value="ECO:0007669"/>
    <property type="project" value="UniProtKB-KW"/>
</dbReference>
<dbReference type="GO" id="GO:0003883">
    <property type="term" value="F:CTP synthase activity"/>
    <property type="evidence" value="ECO:0007669"/>
    <property type="project" value="UniProtKB-UniRule"/>
</dbReference>
<dbReference type="GO" id="GO:0004359">
    <property type="term" value="F:glutaminase activity"/>
    <property type="evidence" value="ECO:0007669"/>
    <property type="project" value="RHEA"/>
</dbReference>
<dbReference type="GO" id="GO:0042802">
    <property type="term" value="F:identical protein binding"/>
    <property type="evidence" value="ECO:0007669"/>
    <property type="project" value="TreeGrafter"/>
</dbReference>
<dbReference type="GO" id="GO:0046872">
    <property type="term" value="F:metal ion binding"/>
    <property type="evidence" value="ECO:0007669"/>
    <property type="project" value="UniProtKB-KW"/>
</dbReference>
<dbReference type="GO" id="GO:0044210">
    <property type="term" value="P:'de novo' CTP biosynthetic process"/>
    <property type="evidence" value="ECO:0007669"/>
    <property type="project" value="UniProtKB-UniRule"/>
</dbReference>
<dbReference type="GO" id="GO:0019856">
    <property type="term" value="P:pyrimidine nucleobase biosynthetic process"/>
    <property type="evidence" value="ECO:0007669"/>
    <property type="project" value="TreeGrafter"/>
</dbReference>
<dbReference type="CDD" id="cd03113">
    <property type="entry name" value="CTPS_N"/>
    <property type="match status" value="1"/>
</dbReference>
<dbReference type="CDD" id="cd01746">
    <property type="entry name" value="GATase1_CTP_Synthase"/>
    <property type="match status" value="1"/>
</dbReference>
<dbReference type="FunFam" id="3.40.50.300:FF:000009">
    <property type="entry name" value="CTP synthase"/>
    <property type="match status" value="1"/>
</dbReference>
<dbReference type="FunFam" id="3.40.50.880:FF:000002">
    <property type="entry name" value="CTP synthase"/>
    <property type="match status" value="1"/>
</dbReference>
<dbReference type="Gene3D" id="3.40.50.880">
    <property type="match status" value="1"/>
</dbReference>
<dbReference type="Gene3D" id="3.40.50.300">
    <property type="entry name" value="P-loop containing nucleotide triphosphate hydrolases"/>
    <property type="match status" value="1"/>
</dbReference>
<dbReference type="HAMAP" id="MF_01227">
    <property type="entry name" value="PyrG"/>
    <property type="match status" value="1"/>
</dbReference>
<dbReference type="InterPro" id="IPR029062">
    <property type="entry name" value="Class_I_gatase-like"/>
</dbReference>
<dbReference type="InterPro" id="IPR004468">
    <property type="entry name" value="CTP_synthase"/>
</dbReference>
<dbReference type="InterPro" id="IPR017456">
    <property type="entry name" value="CTP_synthase_N"/>
</dbReference>
<dbReference type="InterPro" id="IPR017926">
    <property type="entry name" value="GATASE"/>
</dbReference>
<dbReference type="InterPro" id="IPR033828">
    <property type="entry name" value="GATase1_CTP_Synthase"/>
</dbReference>
<dbReference type="InterPro" id="IPR027417">
    <property type="entry name" value="P-loop_NTPase"/>
</dbReference>
<dbReference type="NCBIfam" id="NF003792">
    <property type="entry name" value="PRK05380.1"/>
    <property type="match status" value="1"/>
</dbReference>
<dbReference type="NCBIfam" id="TIGR00337">
    <property type="entry name" value="PyrG"/>
    <property type="match status" value="1"/>
</dbReference>
<dbReference type="PANTHER" id="PTHR11550">
    <property type="entry name" value="CTP SYNTHASE"/>
    <property type="match status" value="1"/>
</dbReference>
<dbReference type="PANTHER" id="PTHR11550:SF0">
    <property type="entry name" value="CTP SYNTHASE-RELATED"/>
    <property type="match status" value="1"/>
</dbReference>
<dbReference type="Pfam" id="PF06418">
    <property type="entry name" value="CTP_synth_N"/>
    <property type="match status" value="1"/>
</dbReference>
<dbReference type="Pfam" id="PF00117">
    <property type="entry name" value="GATase"/>
    <property type="match status" value="1"/>
</dbReference>
<dbReference type="SUPFAM" id="SSF52317">
    <property type="entry name" value="Class I glutamine amidotransferase-like"/>
    <property type="match status" value="1"/>
</dbReference>
<dbReference type="SUPFAM" id="SSF52540">
    <property type="entry name" value="P-loop containing nucleoside triphosphate hydrolases"/>
    <property type="match status" value="1"/>
</dbReference>
<dbReference type="PROSITE" id="PS51273">
    <property type="entry name" value="GATASE_TYPE_1"/>
    <property type="match status" value="1"/>
</dbReference>
<accession>B3EK39</accession>
<name>PYRG_CHLPB</name>
<gene>
    <name evidence="1" type="primary">pyrG</name>
    <name type="ordered locus">Cphamn1_0127</name>
</gene>